<feature type="chain" id="PRO_0000065017" description="Bud site selection protein 4">
    <location>
        <begin position="1"/>
        <end position="1447"/>
    </location>
</feature>
<feature type="domain" description="PH" evidence="1">
    <location>
        <begin position="1302"/>
        <end position="1413"/>
    </location>
</feature>
<feature type="region of interest" description="Disordered" evidence="2">
    <location>
        <begin position="1"/>
        <end position="38"/>
    </location>
</feature>
<feature type="region of interest" description="Disordered" evidence="2">
    <location>
        <begin position="57"/>
        <end position="76"/>
    </location>
</feature>
<feature type="region of interest" description="Disordered" evidence="2">
    <location>
        <begin position="272"/>
        <end position="316"/>
    </location>
</feature>
<feature type="region of interest" description="Disordered" evidence="2">
    <location>
        <begin position="444"/>
        <end position="479"/>
    </location>
</feature>
<feature type="region of interest" description="Disordered" evidence="2">
    <location>
        <begin position="529"/>
        <end position="591"/>
    </location>
</feature>
<feature type="region of interest" description="Disordered" evidence="2">
    <location>
        <begin position="648"/>
        <end position="673"/>
    </location>
</feature>
<feature type="region of interest" description="Interaction with IQG1" evidence="5">
    <location>
        <begin position="768"/>
        <end position="879"/>
    </location>
</feature>
<feature type="compositionally biased region" description="Basic and acidic residues" evidence="2">
    <location>
        <begin position="1"/>
        <end position="16"/>
    </location>
</feature>
<feature type="compositionally biased region" description="Polar residues" evidence="2">
    <location>
        <begin position="22"/>
        <end position="32"/>
    </location>
</feature>
<feature type="compositionally biased region" description="Polar residues" evidence="2">
    <location>
        <begin position="59"/>
        <end position="76"/>
    </location>
</feature>
<feature type="compositionally biased region" description="Polar residues" evidence="2">
    <location>
        <begin position="277"/>
        <end position="316"/>
    </location>
</feature>
<feature type="compositionally biased region" description="Polar residues" evidence="2">
    <location>
        <begin position="538"/>
        <end position="548"/>
    </location>
</feature>
<feature type="compositionally biased region" description="Basic and acidic residues" evidence="2">
    <location>
        <begin position="549"/>
        <end position="580"/>
    </location>
</feature>
<feature type="compositionally biased region" description="Polar residues" evidence="2">
    <location>
        <begin position="648"/>
        <end position="664"/>
    </location>
</feature>
<feature type="modified residue" description="Phosphoserine" evidence="13">
    <location>
        <position position="10"/>
    </location>
</feature>
<feature type="modified residue" description="Phosphoserine" evidence="13">
    <location>
        <position position="78"/>
    </location>
</feature>
<feature type="modified residue" description="Phosphoserine" evidence="13">
    <location>
        <position position="81"/>
    </location>
</feature>
<feature type="modified residue" description="Phosphoserine" evidence="13">
    <location>
        <position position="91"/>
    </location>
</feature>
<feature type="modified residue" description="Phosphoserine" evidence="13">
    <location>
        <position position="96"/>
    </location>
</feature>
<feature type="modified residue" description="Phosphoserine" evidence="14">
    <location>
        <position position="167"/>
    </location>
</feature>
<feature type="modified residue" description="Phosphothreonine" evidence="14">
    <location>
        <position position="365"/>
    </location>
</feature>
<feature type="modified residue" description="Phosphoserine" evidence="14">
    <location>
        <position position="367"/>
    </location>
</feature>
<feature type="modified residue" description="Phosphoserine" evidence="14">
    <location>
        <position position="511"/>
    </location>
</feature>
<feature type="modified residue" description="Phosphoserine" evidence="14">
    <location>
        <position position="616"/>
    </location>
</feature>
<feature type="modified residue" description="Phosphoserine" evidence="14">
    <location>
        <position position="805"/>
    </location>
</feature>
<feature type="modified residue" description="Phosphoserine" evidence="14">
    <location>
        <position position="811"/>
    </location>
</feature>
<feature type="sequence conflict" description="In Ref. 2; CAA89620." evidence="12" ref="2">
    <original>D</original>
    <variation>E</variation>
    <location>
        <position position="340"/>
    </location>
</feature>
<comment type="function">
    <text evidence="9 11">Required for establishment of the axial budding pattern in haploid cells. Cooperates with other bud site selection proteins to recognize a spatial landmark during mitosis and they subsequently become a landmark for downstream polarity establishment factors that coordinate axial budding and cytokinesis. Involved in the septin organization at the bud neck.</text>
</comment>
<comment type="subunit">
    <text evidence="3 5 10">Interacts with AXL1, AXL2, IQG1 and SEC3.</text>
</comment>
<comment type="interaction">
    <interactant intactId="EBI-3848">
        <id>P47136</id>
    </interactant>
    <interactant intactId="EBI-3397">
        <id>P38928</id>
        <label>AXL2</label>
    </interactant>
    <organismsDiffer>false</organismsDiffer>
    <experiments>2</experiments>
</comment>
<comment type="interaction">
    <interactant intactId="EBI-3848">
        <id>P47136</id>
    </interactant>
    <interactant intactId="EBI-3840">
        <id>P25558</id>
        <label>BUD3</label>
    </interactant>
    <organismsDiffer>false</organismsDiffer>
    <experiments>2</experiments>
</comment>
<comment type="interaction">
    <interactant intactId="EBI-3848">
        <id>P47136</id>
    </interactant>
    <interactant intactId="EBI-4174">
        <id>P25342</id>
        <label>CDC10</label>
    </interactant>
    <organismsDiffer>false</organismsDiffer>
    <experiments>3</experiments>
</comment>
<comment type="interaction">
    <interactant intactId="EBI-3848">
        <id>P47136</id>
    </interactant>
    <interactant intactId="EBI-4182">
        <id>P32468</id>
        <label>CDC12</label>
    </interactant>
    <organismsDiffer>false</organismsDiffer>
    <experiments>2</experiments>
</comment>
<comment type="interaction">
    <interactant intactId="EBI-3848">
        <id>P47136</id>
    </interactant>
    <interactant intactId="EBI-35351">
        <id>Q12280</id>
        <label>IQG1</label>
    </interactant>
    <organismsDiffer>false</organismsDiffer>
    <experiments>4</experiments>
</comment>
<comment type="subcellular location">
    <subcellularLocation>
        <location evidence="4 6 11">Bud neck</location>
    </subcellularLocation>
    <text>Localizes to two distinct rings on either side of the mother-bud neck. The rings stay present in cells after cytokinesis and disappear before the next bud emergence. Requires IQG1 for proper localization.</text>
</comment>
<comment type="induction">
    <text evidence="11">Cell cycle-dependent with low levels at START and a peak in mitosis (at protein level).</text>
</comment>
<comment type="PTM">
    <text evidence="8">Phosphorylated by CDC28.</text>
</comment>
<comment type="miscellaneous">
    <text evidence="7">Present with 1600 molecules/cell in log phase SD medium.</text>
</comment>
<comment type="sequence caution" evidence="12">
    <conflict type="frameshift">
        <sequence resource="EMBL-CDS" id="CAA89620"/>
    </conflict>
</comment>
<accession>P47136</accession>
<accession>D6VWR0</accession>
<protein>
    <recommendedName>
        <fullName>Bud site selection protein 4</fullName>
    </recommendedName>
</protein>
<dbReference type="EMBL" id="U41641">
    <property type="protein sequence ID" value="AAB17116.1"/>
    <property type="molecule type" value="Genomic_DNA"/>
</dbReference>
<dbReference type="EMBL" id="Z49592">
    <property type="protein sequence ID" value="CAA89620.1"/>
    <property type="status" value="ALT_FRAME"/>
    <property type="molecule type" value="Genomic_DNA"/>
</dbReference>
<dbReference type="EMBL" id="Z49591">
    <property type="protein sequence ID" value="CAA89619.1"/>
    <property type="molecule type" value="Genomic_DNA"/>
</dbReference>
<dbReference type="EMBL" id="BK006943">
    <property type="protein sequence ID" value="DAA08876.1"/>
    <property type="molecule type" value="Genomic_DNA"/>
</dbReference>
<dbReference type="PIR" id="S57113">
    <property type="entry name" value="S57113"/>
</dbReference>
<dbReference type="RefSeq" id="NP_012625.5">
    <property type="nucleotide sequence ID" value="NM_001181749.3"/>
</dbReference>
<dbReference type="BioGRID" id="33846">
    <property type="interactions" value="97"/>
</dbReference>
<dbReference type="DIP" id="DIP-4971N"/>
<dbReference type="FunCoup" id="P47136">
    <property type="interactions" value="250"/>
</dbReference>
<dbReference type="IntAct" id="P47136">
    <property type="interactions" value="20"/>
</dbReference>
<dbReference type="MINT" id="P47136"/>
<dbReference type="STRING" id="4932.YJR092W"/>
<dbReference type="iPTMnet" id="P47136"/>
<dbReference type="PaxDb" id="4932-YJR092W"/>
<dbReference type="PeptideAtlas" id="P47136"/>
<dbReference type="EnsemblFungi" id="YJR092W_mRNA">
    <property type="protein sequence ID" value="YJR092W"/>
    <property type="gene ID" value="YJR092W"/>
</dbReference>
<dbReference type="GeneID" id="853554"/>
<dbReference type="KEGG" id="sce:YJR092W"/>
<dbReference type="AGR" id="SGD:S000003852"/>
<dbReference type="SGD" id="S000003852">
    <property type="gene designation" value="BUD4"/>
</dbReference>
<dbReference type="VEuPathDB" id="FungiDB:YJR092W"/>
<dbReference type="eggNOG" id="ENOG502REBM">
    <property type="taxonomic scope" value="Eukaryota"/>
</dbReference>
<dbReference type="HOGENOM" id="CLU_004727_0_0_1"/>
<dbReference type="InParanoid" id="P47136"/>
<dbReference type="OMA" id="MLVKHNT"/>
<dbReference type="OrthoDB" id="2123378at2759"/>
<dbReference type="BioCyc" id="YEAST:G3O-31719-MONOMER"/>
<dbReference type="BioGRID-ORCS" id="853554">
    <property type="hits" value="4 hits in 10 CRISPR screens"/>
</dbReference>
<dbReference type="PRO" id="PR:P47136"/>
<dbReference type="Proteomes" id="UP000002311">
    <property type="component" value="Chromosome X"/>
</dbReference>
<dbReference type="RNAct" id="P47136">
    <property type="molecule type" value="protein"/>
</dbReference>
<dbReference type="GO" id="GO:0005935">
    <property type="term" value="C:cellular bud neck"/>
    <property type="evidence" value="ECO:0000314"/>
    <property type="project" value="SGD"/>
</dbReference>
<dbReference type="GO" id="GO:0000142">
    <property type="term" value="C:cellular bud neck contractile ring"/>
    <property type="evidence" value="ECO:0000314"/>
    <property type="project" value="SGD"/>
</dbReference>
<dbReference type="GO" id="GO:0005621">
    <property type="term" value="C:cellular bud scar"/>
    <property type="evidence" value="ECO:0000314"/>
    <property type="project" value="SGD"/>
</dbReference>
<dbReference type="GO" id="GO:0005525">
    <property type="term" value="F:GTP binding"/>
    <property type="evidence" value="ECO:0000314"/>
    <property type="project" value="SGD"/>
</dbReference>
<dbReference type="GO" id="GO:0007120">
    <property type="term" value="P:axial cellular bud site selection"/>
    <property type="evidence" value="ECO:0000315"/>
    <property type="project" value="SGD"/>
</dbReference>
<dbReference type="GO" id="GO:0097271">
    <property type="term" value="P:protein localization to bud neck"/>
    <property type="evidence" value="ECO:0000315"/>
    <property type="project" value="SGD"/>
</dbReference>
<dbReference type="GO" id="GO:0031106">
    <property type="term" value="P:septin ring organization"/>
    <property type="evidence" value="ECO:0000315"/>
    <property type="project" value="SGD"/>
</dbReference>
<dbReference type="CDD" id="cd13278">
    <property type="entry name" value="PH_Bud4"/>
    <property type="match status" value="1"/>
</dbReference>
<dbReference type="Gene3D" id="2.30.29.30">
    <property type="entry name" value="Pleckstrin-homology domain (PH domain)/Phosphotyrosine-binding domain (PTB)"/>
    <property type="match status" value="1"/>
</dbReference>
<dbReference type="InterPro" id="IPR052007">
    <property type="entry name" value="Bud4"/>
</dbReference>
<dbReference type="InterPro" id="IPR011993">
    <property type="entry name" value="PH-like_dom_sf"/>
</dbReference>
<dbReference type="InterPro" id="IPR001849">
    <property type="entry name" value="PH_domain"/>
</dbReference>
<dbReference type="PANTHER" id="PTHR36100">
    <property type="entry name" value="BUD SITE SELECTION PROTEIN 4"/>
    <property type="match status" value="1"/>
</dbReference>
<dbReference type="PANTHER" id="PTHR36100:SF1">
    <property type="entry name" value="BUD SITE SELECTION PROTEIN 4"/>
    <property type="match status" value="1"/>
</dbReference>
<dbReference type="Pfam" id="PF00169">
    <property type="entry name" value="PH"/>
    <property type="match status" value="1"/>
</dbReference>
<dbReference type="SMART" id="SM00233">
    <property type="entry name" value="PH"/>
    <property type="match status" value="1"/>
</dbReference>
<dbReference type="SUPFAM" id="SSF50729">
    <property type="entry name" value="PH domain-like"/>
    <property type="match status" value="1"/>
</dbReference>
<dbReference type="PROSITE" id="PS50003">
    <property type="entry name" value="PH_DOMAIN"/>
    <property type="match status" value="1"/>
</dbReference>
<gene>
    <name type="primary">BUD4</name>
    <name type="ordered locus">YJR092W</name>
    <name type="ORF">J1905</name>
</gene>
<sequence length="1447" mass="164486">MHDAESTVDSLLKEIDNEMEQTKSNITQNGSEDTPHNWKLPLQEIGDDTMEMLVKHNTRSNATENSRGRSPSKMSTISNESLNLGLLRVNSELEESPAAVHQERIKNSVANGALGHANSPKVLNNLKNMAQDIDKLARDEEKPVKLSSSPLKFTLKSTQPLLSYPESPIHRSSIEIETNYDDEDEEEEDAYTCLTQSPQILHSPSRIPITNAVSINKLNLDFTLNPNESDKSLVSDTSVDSTGRELDTKTIPELPFCMSSTPEMTPVDEKCNLPSKLLNTSNNSHSDSRSPTASVEDLNISTNLPGADSSQNNPVTTDADALIENDVVRDLQQNMEHIDDAFDEKKVLDEGCSNEPVTFLGENDTRSIVYSNKGTNANVQEFSQEDSLAHSEPKFKDLNATSDDVWNEDKETDANISTSTKSEESYIADYKVTRQEDWDTKKLHQESEHANEQPAIIPQKDSSEETFTELNNESEFQRNFKDGEEYRIVQHEESLYGQRTKSPEENIINGSEIGVDHGEAAEVNEPLAKTSAEEHDLSSSCEDQSVSEARNKDRIEEKEVETKDENIETEKDESEYHKVEENEEPEHVPLLPPLPRWEEIQFNEPFIDENDTSNDSIDLTRSMKPSDYISIWHIQEEEIKSNSPESIANSQFSQQSSITTASTVDSKKDNGSTSFKFKPRIVSRSRIYNPKSRVSSLNYYDNEDYILSNSEWNALDPMRRNTLISKRIQDNIRTQKGHAPLIRPSIMKLNGEDSGFQNHFLEVEQPQEHENIPLSTHLSEQDITTNVGLDEQKLPTNTQDEAEISIREIESAGDITFNRGDLLSLSFDEELGQDFANFLDALDHDSTSFNHGPDDSSSFQRDSSKKSFNSLWESSYELKPPPSIRKQPIAPDVLQKLLESDTKDDADLEKIREERITEPRTGLGIGMLKTPVKDVSIALAASIKGYEASFSDTDSRPEGMNNSDAITLNMFDDFEEDKMTPSTPVRSISPIKRHVSSPFKVVKAGNKQENNEINIKAEEEIEPMTQQETDGLKQDIPPLLAQTKDNVEAKEETITQLEEPQDVEQEFPDMGTLYLSIKAISTLALYGTKSHRATYAIVFDNGENVVQTPWESLPYDGNIRINKEFELPIDFKGKAETSSASSERDSYKKCVITLKCKYEKPRHELVEIVDKVPVGKSFFGKTKYKFEKKYVQKKPKQDEWDYLFAQDGSFARCEIEINEEFLKNVAFNTSHMHYNMINKWSRIADKIHGSKRLYELPRKAPHKVASLDVEACFLERTSAFEQFPKQFSLVNKIVSKYKLQQNIYKEGYLLQDGGDLKGKIENRFFKLHGSQLSGYHEISRKAKIDINLLKVTKVLRNEDIQADNGGQRNFTDWVLFNECFQLVFDDGERITFNAECSNEEKSDWYNKLQEVVELNVFHQPWVKKYCEKLAEEEKTRTTGHNLKQDFN</sequence>
<proteinExistence type="evidence at protein level"/>
<evidence type="ECO:0000255" key="1">
    <source>
        <dbReference type="PROSITE-ProRule" id="PRU00145"/>
    </source>
</evidence>
<evidence type="ECO:0000256" key="2">
    <source>
        <dbReference type="SAM" id="MobiDB-lite"/>
    </source>
</evidence>
<evidence type="ECO:0000269" key="3">
    <source>
    </source>
</evidence>
<evidence type="ECO:0000269" key="4">
    <source>
    </source>
</evidence>
<evidence type="ECO:0000269" key="5">
    <source>
    </source>
</evidence>
<evidence type="ECO:0000269" key="6">
    <source>
    </source>
</evidence>
<evidence type="ECO:0000269" key="7">
    <source>
    </source>
</evidence>
<evidence type="ECO:0000269" key="8">
    <source>
    </source>
</evidence>
<evidence type="ECO:0000269" key="9">
    <source>
    </source>
</evidence>
<evidence type="ECO:0000269" key="10">
    <source>
    </source>
</evidence>
<evidence type="ECO:0000269" key="11">
    <source>
    </source>
</evidence>
<evidence type="ECO:0000305" key="12"/>
<evidence type="ECO:0007744" key="13">
    <source>
    </source>
</evidence>
<evidence type="ECO:0007744" key="14">
    <source>
    </source>
</evidence>
<keyword id="KW-0131">Cell cycle</keyword>
<keyword id="KW-0132">Cell division</keyword>
<keyword id="KW-0597">Phosphoprotein</keyword>
<keyword id="KW-1185">Reference proteome</keyword>
<name>BUD4_YEAST</name>
<reference key="1">
    <citation type="journal article" date="1996" name="J. Cell Biol.">
        <title>The BUD4 protein of yeast, required for axial budding, is localized to the mother/BUD neck in a cell cycle-dependent manner.</title>
        <authorList>
            <person name="Sanders S.L."/>
            <person name="Herskowitz I."/>
        </authorList>
    </citation>
    <scope>NUCLEOTIDE SEQUENCE [GENOMIC DNA]</scope>
    <scope>FUNCTION</scope>
    <scope>SUBCELLULAR LOCATION</scope>
    <scope>INDUCTION</scope>
</reference>
<reference key="2">
    <citation type="journal article" date="1996" name="EMBO J.">
        <title>Complete nucleotide sequence of Saccharomyces cerevisiae chromosome X.</title>
        <authorList>
            <person name="Galibert F."/>
            <person name="Alexandraki D."/>
            <person name="Baur A."/>
            <person name="Boles E."/>
            <person name="Chalwatzis N."/>
            <person name="Chuat J.-C."/>
            <person name="Coster F."/>
            <person name="Cziepluch C."/>
            <person name="de Haan M."/>
            <person name="Domdey H."/>
            <person name="Durand P."/>
            <person name="Entian K.-D."/>
            <person name="Gatius M."/>
            <person name="Goffeau A."/>
            <person name="Grivell L.A."/>
            <person name="Hennemann A."/>
            <person name="Herbert C.J."/>
            <person name="Heumann K."/>
            <person name="Hilger F."/>
            <person name="Hollenberg C.P."/>
            <person name="Huang M.-E."/>
            <person name="Jacq C."/>
            <person name="Jauniaux J.-C."/>
            <person name="Katsoulou C."/>
            <person name="Kirchrath L."/>
            <person name="Kleine K."/>
            <person name="Kordes E."/>
            <person name="Koetter P."/>
            <person name="Liebl S."/>
            <person name="Louis E.J."/>
            <person name="Manus V."/>
            <person name="Mewes H.-W."/>
            <person name="Miosga T."/>
            <person name="Obermaier B."/>
            <person name="Perea J."/>
            <person name="Pohl T.M."/>
            <person name="Portetelle D."/>
            <person name="Pujol A."/>
            <person name="Purnelle B."/>
            <person name="Ramezani Rad M."/>
            <person name="Rasmussen S.W."/>
            <person name="Rose M."/>
            <person name="Rossau R."/>
            <person name="Schaaff-Gerstenschlaeger I."/>
            <person name="Smits P.H.M."/>
            <person name="Scarcez T."/>
            <person name="Soriano N."/>
            <person name="To Van D."/>
            <person name="Tzermia M."/>
            <person name="Van Broekhoven A."/>
            <person name="Vandenbol M."/>
            <person name="Wedler H."/>
            <person name="von Wettstein D."/>
            <person name="Wambutt R."/>
            <person name="Zagulski M."/>
            <person name="Zollner A."/>
            <person name="Karpfinger-Hartl L."/>
        </authorList>
    </citation>
    <scope>NUCLEOTIDE SEQUENCE [LARGE SCALE GENOMIC DNA]</scope>
    <source>
        <strain>ATCC 204508 / S288c</strain>
    </source>
</reference>
<reference key="3">
    <citation type="journal article" date="2014" name="G3 (Bethesda)">
        <title>The reference genome sequence of Saccharomyces cerevisiae: Then and now.</title>
        <authorList>
            <person name="Engel S.R."/>
            <person name="Dietrich F.S."/>
            <person name="Fisk D.G."/>
            <person name="Binkley G."/>
            <person name="Balakrishnan R."/>
            <person name="Costanzo M.C."/>
            <person name="Dwight S.S."/>
            <person name="Hitz B.C."/>
            <person name="Karra K."/>
            <person name="Nash R.S."/>
            <person name="Weng S."/>
            <person name="Wong E.D."/>
            <person name="Lloyd P."/>
            <person name="Skrzypek M.S."/>
            <person name="Miyasato S.R."/>
            <person name="Simison M."/>
            <person name="Cherry J.M."/>
        </authorList>
    </citation>
    <scope>GENOME REANNOTATION</scope>
    <source>
        <strain>ATCC 204508 / S288c</strain>
    </source>
</reference>
<reference key="4">
    <citation type="journal article" date="2002" name="Curr. Biol.">
        <title>Subcellular localization of Axl1, the cell type-specific regulator of polarity.</title>
        <authorList>
            <person name="Lord M."/>
            <person name="Inose F."/>
            <person name="Hiroko T."/>
            <person name="Hata T."/>
            <person name="Fujita A."/>
            <person name="Chant J."/>
        </authorList>
    </citation>
    <scope>INTERACTION WITH AXL1</scope>
</reference>
<reference key="5">
    <citation type="journal article" date="2002" name="J. Cell Biol.">
        <title>Iqg1p links spatial and secretion landmarks to polarity and cytokinesis.</title>
        <authorList>
            <person name="Osman M.A."/>
            <person name="Konopka J.B."/>
            <person name="Cerione R.A."/>
        </authorList>
    </citation>
    <scope>INTERACTION WITH IQG1 AND SEC3</scope>
</reference>
<reference key="6">
    <citation type="journal article" date="2002" name="Mol. Biol. Cell">
        <title>The roles of bud-site-selection proteins during haploid invasive growth in yeast.</title>
        <authorList>
            <person name="Cullen P.J."/>
            <person name="Sprague G.F. Jr."/>
        </authorList>
    </citation>
    <scope>SUBCELLULAR LOCATION</scope>
</reference>
<reference key="7">
    <citation type="journal article" date="2003" name="Nature">
        <title>Global analysis of protein localization in budding yeast.</title>
        <authorList>
            <person name="Huh W.-K."/>
            <person name="Falvo J.V."/>
            <person name="Gerke L.C."/>
            <person name="Carroll A.S."/>
            <person name="Howson R.W."/>
            <person name="Weissman J.S."/>
            <person name="O'Shea E.K."/>
        </authorList>
    </citation>
    <scope>SUBCELLULAR LOCATION [LARGE SCALE ANALYSIS]</scope>
</reference>
<reference key="8">
    <citation type="journal article" date="2003" name="Nature">
        <title>Global analysis of protein expression in yeast.</title>
        <authorList>
            <person name="Ghaemmaghami S."/>
            <person name="Huh W.-K."/>
            <person name="Bower K."/>
            <person name="Howson R.W."/>
            <person name="Belle A."/>
            <person name="Dephoure N."/>
            <person name="O'Shea E.K."/>
            <person name="Weissman J.S."/>
        </authorList>
    </citation>
    <scope>LEVEL OF PROTEIN EXPRESSION [LARGE SCALE ANALYSIS]</scope>
</reference>
<reference key="9">
    <citation type="journal article" date="2003" name="Nature">
        <title>Targets of the cyclin-dependent kinase Cdk1.</title>
        <authorList>
            <person name="Ubersax J.A."/>
            <person name="Woodbury E.L."/>
            <person name="Quang P.N."/>
            <person name="Paraz M."/>
            <person name="Blethrow J.D."/>
            <person name="Shah K."/>
            <person name="Shokat K.M."/>
            <person name="Morgan D.O."/>
        </authorList>
    </citation>
    <scope>PHOSPHORYLATION BY CDC28</scope>
</reference>
<reference key="10">
    <citation type="journal article" date="2005" name="J. Cell Sci.">
        <title>Interplay between septin organization, cell cycle and cell shape in yeast.</title>
        <authorList>
            <person name="Gladfelter A.S."/>
            <person name="Kozubowski L."/>
            <person name="Zyla T.R."/>
            <person name="Lew D.J."/>
        </authorList>
    </citation>
    <scope>FUNCTION</scope>
</reference>
<reference key="11">
    <citation type="journal article" date="2007" name="Mol. Biol. Cell">
        <title>Sequential and distinct roles of the cadherin domain-containing protein Axl2p in cell polarization in yeast cell cycle.</title>
        <authorList>
            <person name="Gao X.D."/>
            <person name="Sperber L.M."/>
            <person name="Kane S.A."/>
            <person name="Tong Z."/>
            <person name="Tong A.H."/>
            <person name="Boone C."/>
            <person name="Bi E."/>
        </authorList>
    </citation>
    <scope>INTERACTION WITH AXL2</scope>
</reference>
<reference key="12">
    <citation type="journal article" date="2008" name="Mol. Cell. Proteomics">
        <title>A multidimensional chromatography technology for in-depth phosphoproteome analysis.</title>
        <authorList>
            <person name="Albuquerque C.P."/>
            <person name="Smolka M.B."/>
            <person name="Payne S.H."/>
            <person name="Bafna V."/>
            <person name="Eng J."/>
            <person name="Zhou H."/>
        </authorList>
    </citation>
    <scope>PHOSPHORYLATION [LARGE SCALE ANALYSIS] AT SER-10; SER-78; SER-81; SER-91 AND SER-96</scope>
    <scope>IDENTIFICATION BY MASS SPECTROMETRY [LARGE SCALE ANALYSIS]</scope>
</reference>
<reference key="13">
    <citation type="journal article" date="2009" name="Science">
        <title>Global analysis of Cdk1 substrate phosphorylation sites provides insights into evolution.</title>
        <authorList>
            <person name="Holt L.J."/>
            <person name="Tuch B.B."/>
            <person name="Villen J."/>
            <person name="Johnson A.D."/>
            <person name="Gygi S.P."/>
            <person name="Morgan D.O."/>
        </authorList>
    </citation>
    <scope>PHOSPHORYLATION [LARGE SCALE ANALYSIS] AT SER-167; THR-365; SER-367; SER-511; SER-616; SER-805 AND SER-811</scope>
    <scope>IDENTIFICATION BY MASS SPECTROMETRY [LARGE SCALE ANALYSIS]</scope>
</reference>
<organism>
    <name type="scientific">Saccharomyces cerevisiae (strain ATCC 204508 / S288c)</name>
    <name type="common">Baker's yeast</name>
    <dbReference type="NCBI Taxonomy" id="559292"/>
    <lineage>
        <taxon>Eukaryota</taxon>
        <taxon>Fungi</taxon>
        <taxon>Dikarya</taxon>
        <taxon>Ascomycota</taxon>
        <taxon>Saccharomycotina</taxon>
        <taxon>Saccharomycetes</taxon>
        <taxon>Saccharomycetales</taxon>
        <taxon>Saccharomycetaceae</taxon>
        <taxon>Saccharomyces</taxon>
    </lineage>
</organism>